<sequence length="989" mass="106048">MASNNVAQFAAELKMPAGVLLEQLQAAGVTKASEDDSLSETDKARLLDHLRKSHGSTDADKRKITLTKRHTSEIKQSDATGKARTIQVEVRKKRTFVRRDETSAENGDASNHVAEAEVDDLELQRREEEARHEAELLEKQAQELKARQEQLEREEAERQAREAAAEVERRRAEEEAAKKRAAAAAEAAAREQQTQASKPAQAAQPAAAKAEPVAAKAAEPVVARQSEQDDERAAAERAAQREAAKKAEDAARQAAEKARAEQEEIAKRRAAAEAEARAIREMMNTPRKAQVKAPEPAPKPAEPAKAAEAKGTLHKPARPAGEAPARPAAKKPAAAAPAATTTPSAGDKKKPGGGKGGWQDDAAKRRGIKTRGDTSGGVDRGWRGGPKGRGKHQDQNTTFQAPTEPIVREVHVPETITVADLAHKMAVKASEVIKSMMKLGQMVTINQMLDQETAMIIVEELGHHAVAAKLDDPEAMLVEGEVSDAESLPRPPVVTVMGHVDHGKTSLLDYIRRAKVAAGEAGGITQHIGAYHVETPRGVITFLDTPGHEAFTAMRARGAKATDIVILVVAADDGVMPQTKEAIAHAKAGGVPLVVAINKIDKPDANPERVKQELVAEGVVPEEYGGDSPFVSVSAKTGAGIDDLLENVLLQAEVLELKAPVEAPAKGLVIEAKLDKGKGPVATILVQSGTLNRGDVVLAGSAYGRVRAMLDETGKPTKSAGPSIPVEIQGLSEVPQAGEEVIVMPDERKAREVALFRQGKFRDVKLAKQQAAKLENMLEQMGEGEVQYMPLIVKADVQGSQEALVQSLLKLSTDEVRVQIVHGAVGGISESDVNLATASKAVIIGFNTRADAQARKLAEANGVDIRYYNIIYDAVDDVKAAMSGMLAPEKREVVTGTVEVRQVFKVPKIGAVAGCMVTDGFVKRSSSVRVLRNNVVIFTGELDSLKRFKDDVKEVRQGFECGMSIKNFNDIVEGDQFEVFEVTEVARSL</sequence>
<gene>
    <name evidence="2" type="primary">infB</name>
    <name type="ordered locus">Bxeno_A1605</name>
    <name type="ORF">Bxe_A2820</name>
</gene>
<dbReference type="EMBL" id="CP000270">
    <property type="protein sequence ID" value="ABE30143.1"/>
    <property type="molecule type" value="Genomic_DNA"/>
</dbReference>
<dbReference type="RefSeq" id="WP_011487846.1">
    <property type="nucleotide sequence ID" value="NC_007951.1"/>
</dbReference>
<dbReference type="SMR" id="Q140U6"/>
<dbReference type="STRING" id="266265.Bxe_A2820"/>
<dbReference type="KEGG" id="bxb:DR64_502"/>
<dbReference type="KEGG" id="bxe:Bxe_A2820"/>
<dbReference type="PATRIC" id="fig|266265.5.peg.1671"/>
<dbReference type="eggNOG" id="COG0532">
    <property type="taxonomic scope" value="Bacteria"/>
</dbReference>
<dbReference type="OrthoDB" id="9811804at2"/>
<dbReference type="Proteomes" id="UP000001817">
    <property type="component" value="Chromosome 1"/>
</dbReference>
<dbReference type="GO" id="GO:0005829">
    <property type="term" value="C:cytosol"/>
    <property type="evidence" value="ECO:0007669"/>
    <property type="project" value="TreeGrafter"/>
</dbReference>
<dbReference type="GO" id="GO:0005525">
    <property type="term" value="F:GTP binding"/>
    <property type="evidence" value="ECO:0007669"/>
    <property type="project" value="UniProtKB-KW"/>
</dbReference>
<dbReference type="GO" id="GO:0003924">
    <property type="term" value="F:GTPase activity"/>
    <property type="evidence" value="ECO:0007669"/>
    <property type="project" value="UniProtKB-UniRule"/>
</dbReference>
<dbReference type="GO" id="GO:0003743">
    <property type="term" value="F:translation initiation factor activity"/>
    <property type="evidence" value="ECO:0007669"/>
    <property type="project" value="UniProtKB-UniRule"/>
</dbReference>
<dbReference type="CDD" id="cd01887">
    <property type="entry name" value="IF2_eIF5B"/>
    <property type="match status" value="1"/>
</dbReference>
<dbReference type="CDD" id="cd03702">
    <property type="entry name" value="IF2_mtIF2_II"/>
    <property type="match status" value="1"/>
</dbReference>
<dbReference type="CDD" id="cd03692">
    <property type="entry name" value="mtIF2_IVc"/>
    <property type="match status" value="1"/>
</dbReference>
<dbReference type="FunFam" id="2.40.30.10:FF:000007">
    <property type="entry name" value="Translation initiation factor IF-2"/>
    <property type="match status" value="1"/>
</dbReference>
<dbReference type="FunFam" id="2.40.30.10:FF:000008">
    <property type="entry name" value="Translation initiation factor IF-2"/>
    <property type="match status" value="1"/>
</dbReference>
<dbReference type="FunFam" id="3.40.50.10050:FF:000001">
    <property type="entry name" value="Translation initiation factor IF-2"/>
    <property type="match status" value="1"/>
</dbReference>
<dbReference type="FunFam" id="3.40.50.300:FF:000019">
    <property type="entry name" value="Translation initiation factor IF-2"/>
    <property type="match status" value="1"/>
</dbReference>
<dbReference type="Gene3D" id="3.40.50.300">
    <property type="entry name" value="P-loop containing nucleotide triphosphate hydrolases"/>
    <property type="match status" value="1"/>
</dbReference>
<dbReference type="Gene3D" id="3.30.56.50">
    <property type="entry name" value="Putative DNA-binding domain, N-terminal subdomain of bacterial translation initiation factor IF2"/>
    <property type="match status" value="1"/>
</dbReference>
<dbReference type="Gene3D" id="2.40.30.10">
    <property type="entry name" value="Translation factors"/>
    <property type="match status" value="2"/>
</dbReference>
<dbReference type="Gene3D" id="3.40.50.10050">
    <property type="entry name" value="Translation initiation factor IF- 2, domain 3"/>
    <property type="match status" value="1"/>
</dbReference>
<dbReference type="HAMAP" id="MF_00100_B">
    <property type="entry name" value="IF_2_B"/>
    <property type="match status" value="1"/>
</dbReference>
<dbReference type="InterPro" id="IPR009061">
    <property type="entry name" value="DNA-bd_dom_put_sf"/>
</dbReference>
<dbReference type="InterPro" id="IPR053905">
    <property type="entry name" value="EF-G-like_DII"/>
</dbReference>
<dbReference type="InterPro" id="IPR013575">
    <property type="entry name" value="IF2_assoc_dom_bac"/>
</dbReference>
<dbReference type="InterPro" id="IPR044145">
    <property type="entry name" value="IF2_II"/>
</dbReference>
<dbReference type="InterPro" id="IPR006847">
    <property type="entry name" value="IF2_N"/>
</dbReference>
<dbReference type="InterPro" id="IPR027417">
    <property type="entry name" value="P-loop_NTPase"/>
</dbReference>
<dbReference type="InterPro" id="IPR005225">
    <property type="entry name" value="Small_GTP-bd"/>
</dbReference>
<dbReference type="InterPro" id="IPR000795">
    <property type="entry name" value="T_Tr_GTP-bd_dom"/>
</dbReference>
<dbReference type="InterPro" id="IPR000178">
    <property type="entry name" value="TF_IF2_bacterial-like"/>
</dbReference>
<dbReference type="InterPro" id="IPR015760">
    <property type="entry name" value="TIF_IF2"/>
</dbReference>
<dbReference type="InterPro" id="IPR023115">
    <property type="entry name" value="TIF_IF2_dom3"/>
</dbReference>
<dbReference type="InterPro" id="IPR036925">
    <property type="entry name" value="TIF_IF2_dom3_sf"/>
</dbReference>
<dbReference type="InterPro" id="IPR009000">
    <property type="entry name" value="Transl_B-barrel_sf"/>
</dbReference>
<dbReference type="NCBIfam" id="TIGR00487">
    <property type="entry name" value="IF-2"/>
    <property type="match status" value="1"/>
</dbReference>
<dbReference type="NCBIfam" id="TIGR00231">
    <property type="entry name" value="small_GTP"/>
    <property type="match status" value="1"/>
</dbReference>
<dbReference type="PANTHER" id="PTHR43381:SF5">
    <property type="entry name" value="TR-TYPE G DOMAIN-CONTAINING PROTEIN"/>
    <property type="match status" value="1"/>
</dbReference>
<dbReference type="PANTHER" id="PTHR43381">
    <property type="entry name" value="TRANSLATION INITIATION FACTOR IF-2-RELATED"/>
    <property type="match status" value="1"/>
</dbReference>
<dbReference type="Pfam" id="PF22042">
    <property type="entry name" value="EF-G_D2"/>
    <property type="match status" value="1"/>
</dbReference>
<dbReference type="Pfam" id="PF00009">
    <property type="entry name" value="GTP_EFTU"/>
    <property type="match status" value="1"/>
</dbReference>
<dbReference type="Pfam" id="PF11987">
    <property type="entry name" value="IF-2"/>
    <property type="match status" value="1"/>
</dbReference>
<dbReference type="Pfam" id="PF08364">
    <property type="entry name" value="IF2_assoc"/>
    <property type="match status" value="1"/>
</dbReference>
<dbReference type="Pfam" id="PF04760">
    <property type="entry name" value="IF2_N"/>
    <property type="match status" value="2"/>
</dbReference>
<dbReference type="SUPFAM" id="SSF52156">
    <property type="entry name" value="Initiation factor IF2/eIF5b, domain 3"/>
    <property type="match status" value="1"/>
</dbReference>
<dbReference type="SUPFAM" id="SSF52540">
    <property type="entry name" value="P-loop containing nucleoside triphosphate hydrolases"/>
    <property type="match status" value="1"/>
</dbReference>
<dbReference type="SUPFAM" id="SSF46955">
    <property type="entry name" value="Putative DNA-binding domain"/>
    <property type="match status" value="1"/>
</dbReference>
<dbReference type="SUPFAM" id="SSF50447">
    <property type="entry name" value="Translation proteins"/>
    <property type="match status" value="2"/>
</dbReference>
<dbReference type="PROSITE" id="PS51722">
    <property type="entry name" value="G_TR_2"/>
    <property type="match status" value="1"/>
</dbReference>
<dbReference type="PROSITE" id="PS01176">
    <property type="entry name" value="IF2"/>
    <property type="match status" value="1"/>
</dbReference>
<evidence type="ECO:0000250" key="1"/>
<evidence type="ECO:0000255" key="2">
    <source>
        <dbReference type="HAMAP-Rule" id="MF_00100"/>
    </source>
</evidence>
<evidence type="ECO:0000256" key="3">
    <source>
        <dbReference type="SAM" id="MobiDB-lite"/>
    </source>
</evidence>
<protein>
    <recommendedName>
        <fullName evidence="2">Translation initiation factor IF-2</fullName>
    </recommendedName>
</protein>
<proteinExistence type="inferred from homology"/>
<feature type="chain" id="PRO_1000008218" description="Translation initiation factor IF-2">
    <location>
        <begin position="1"/>
        <end position="989"/>
    </location>
</feature>
<feature type="domain" description="tr-type G">
    <location>
        <begin position="489"/>
        <end position="658"/>
    </location>
</feature>
<feature type="region of interest" description="Disordered" evidence="3">
    <location>
        <begin position="28"/>
        <end position="60"/>
    </location>
</feature>
<feature type="region of interest" description="Disordered" evidence="3">
    <location>
        <begin position="97"/>
        <end position="397"/>
    </location>
</feature>
<feature type="region of interest" description="G1" evidence="1">
    <location>
        <begin position="498"/>
        <end position="505"/>
    </location>
</feature>
<feature type="region of interest" description="G2" evidence="1">
    <location>
        <begin position="523"/>
        <end position="527"/>
    </location>
</feature>
<feature type="region of interest" description="G3" evidence="1">
    <location>
        <begin position="544"/>
        <end position="547"/>
    </location>
</feature>
<feature type="region of interest" description="G4" evidence="1">
    <location>
        <begin position="598"/>
        <end position="601"/>
    </location>
</feature>
<feature type="region of interest" description="G5" evidence="1">
    <location>
        <begin position="634"/>
        <end position="636"/>
    </location>
</feature>
<feature type="compositionally biased region" description="Basic and acidic residues" evidence="3">
    <location>
        <begin position="40"/>
        <end position="60"/>
    </location>
</feature>
<feature type="compositionally biased region" description="Basic and acidic residues" evidence="3">
    <location>
        <begin position="122"/>
        <end position="178"/>
    </location>
</feature>
<feature type="compositionally biased region" description="Low complexity" evidence="3">
    <location>
        <begin position="182"/>
        <end position="223"/>
    </location>
</feature>
<feature type="compositionally biased region" description="Basic and acidic residues" evidence="3">
    <location>
        <begin position="231"/>
        <end position="280"/>
    </location>
</feature>
<feature type="compositionally biased region" description="Low complexity" evidence="3">
    <location>
        <begin position="318"/>
        <end position="345"/>
    </location>
</feature>
<feature type="compositionally biased region" description="Gly residues" evidence="3">
    <location>
        <begin position="374"/>
        <end position="387"/>
    </location>
</feature>
<feature type="binding site" evidence="2">
    <location>
        <begin position="498"/>
        <end position="505"/>
    </location>
    <ligand>
        <name>GTP</name>
        <dbReference type="ChEBI" id="CHEBI:37565"/>
    </ligand>
</feature>
<feature type="binding site" evidence="2">
    <location>
        <begin position="544"/>
        <end position="548"/>
    </location>
    <ligand>
        <name>GTP</name>
        <dbReference type="ChEBI" id="CHEBI:37565"/>
    </ligand>
</feature>
<feature type="binding site" evidence="2">
    <location>
        <begin position="598"/>
        <end position="601"/>
    </location>
    <ligand>
        <name>GTP</name>
        <dbReference type="ChEBI" id="CHEBI:37565"/>
    </ligand>
</feature>
<name>IF2_PARXL</name>
<keyword id="KW-0963">Cytoplasm</keyword>
<keyword id="KW-0342">GTP-binding</keyword>
<keyword id="KW-0396">Initiation factor</keyword>
<keyword id="KW-0547">Nucleotide-binding</keyword>
<keyword id="KW-0648">Protein biosynthesis</keyword>
<keyword id="KW-1185">Reference proteome</keyword>
<accession>Q140U6</accession>
<organism>
    <name type="scientific">Paraburkholderia xenovorans (strain LB400)</name>
    <dbReference type="NCBI Taxonomy" id="266265"/>
    <lineage>
        <taxon>Bacteria</taxon>
        <taxon>Pseudomonadati</taxon>
        <taxon>Pseudomonadota</taxon>
        <taxon>Betaproteobacteria</taxon>
        <taxon>Burkholderiales</taxon>
        <taxon>Burkholderiaceae</taxon>
        <taxon>Paraburkholderia</taxon>
    </lineage>
</organism>
<reference key="1">
    <citation type="journal article" date="2006" name="Proc. Natl. Acad. Sci. U.S.A.">
        <title>Burkholderia xenovorans LB400 harbors a multi-replicon, 9.73-Mbp genome shaped for versatility.</title>
        <authorList>
            <person name="Chain P.S.G."/>
            <person name="Denef V.J."/>
            <person name="Konstantinidis K.T."/>
            <person name="Vergez L.M."/>
            <person name="Agullo L."/>
            <person name="Reyes V.L."/>
            <person name="Hauser L."/>
            <person name="Cordova M."/>
            <person name="Gomez L."/>
            <person name="Gonzalez M."/>
            <person name="Land M."/>
            <person name="Lao V."/>
            <person name="Larimer F."/>
            <person name="LiPuma J.J."/>
            <person name="Mahenthiralingam E."/>
            <person name="Malfatti S.A."/>
            <person name="Marx C.J."/>
            <person name="Parnell J.J."/>
            <person name="Ramette A."/>
            <person name="Richardson P."/>
            <person name="Seeger M."/>
            <person name="Smith D."/>
            <person name="Spilker T."/>
            <person name="Sul W.J."/>
            <person name="Tsoi T.V."/>
            <person name="Ulrich L.E."/>
            <person name="Zhulin I.B."/>
            <person name="Tiedje J.M."/>
        </authorList>
    </citation>
    <scope>NUCLEOTIDE SEQUENCE [LARGE SCALE GENOMIC DNA]</scope>
    <source>
        <strain>LB400</strain>
    </source>
</reference>
<comment type="function">
    <text evidence="2">One of the essential components for the initiation of protein synthesis. Protects formylmethionyl-tRNA from spontaneous hydrolysis and promotes its binding to the 30S ribosomal subunits. Also involved in the hydrolysis of GTP during the formation of the 70S ribosomal complex.</text>
</comment>
<comment type="subcellular location">
    <subcellularLocation>
        <location evidence="2">Cytoplasm</location>
    </subcellularLocation>
</comment>
<comment type="similarity">
    <text evidence="2">Belongs to the TRAFAC class translation factor GTPase superfamily. Classic translation factor GTPase family. IF-2 subfamily.</text>
</comment>